<reference key="1">
    <citation type="journal article" date="2013" name="Toxins">
        <title>A proteomics and transcriptomics investigation of the venom from the barychelid spider Trittame loki (brush-foot trapdoor).</title>
        <authorList>
            <person name="Undheim E.A."/>
            <person name="Sunagar K."/>
            <person name="Herzig V."/>
            <person name="Kely L."/>
            <person name="Low D.H."/>
            <person name="Jackson T.N."/>
            <person name="Jones A."/>
            <person name="Kurniawan N."/>
            <person name="King G.F."/>
            <person name="Ali S.A."/>
            <person name="Antunes A."/>
            <person name="Ruder T."/>
            <person name="Fry B.G."/>
        </authorList>
    </citation>
    <scope>NUCLEOTIDE SEQUENCE [MRNA]</scope>
    <source>
        <tissue>Venom gland</tissue>
    </source>
</reference>
<accession>W4VS32</accession>
<protein>
    <recommendedName>
        <fullName evidence="3">Toxin ICK-15</fullName>
    </recommendedName>
</protein>
<keyword id="KW-1015">Disulfide bond</keyword>
<keyword id="KW-0325">Glycoprotein</keyword>
<keyword id="KW-0872">Ion channel impairing toxin</keyword>
<keyword id="KW-0960">Knottin</keyword>
<keyword id="KW-0528">Neurotoxin</keyword>
<keyword id="KW-0964">Secreted</keyword>
<keyword id="KW-0732">Signal</keyword>
<keyword id="KW-0800">Toxin</keyword>
<comment type="function">
    <text evidence="4">Probable neurotoxin with ion channel impairing activity.</text>
</comment>
<comment type="subcellular location">
    <subcellularLocation>
        <location evidence="5">Secreted</location>
    </subcellularLocation>
</comment>
<comment type="tissue specificity">
    <text evidence="5">Expressed by the venom gland.</text>
</comment>
<comment type="domain">
    <text evidence="1">The presence of a 'disulfide through disulfide knot' structurally defines this protein as a knottin.</text>
</comment>
<comment type="similarity">
    <text evidence="4">Belongs to the neurotoxin 21 family.</text>
</comment>
<organism>
    <name type="scientific">Trittame loki</name>
    <name type="common">Brush-footed trapdoor spider</name>
    <dbReference type="NCBI Taxonomy" id="1295018"/>
    <lineage>
        <taxon>Eukaryota</taxon>
        <taxon>Metazoa</taxon>
        <taxon>Ecdysozoa</taxon>
        <taxon>Arthropoda</taxon>
        <taxon>Chelicerata</taxon>
        <taxon>Arachnida</taxon>
        <taxon>Araneae</taxon>
        <taxon>Mygalomorphae</taxon>
        <taxon>Barychelidae</taxon>
        <taxon>Trittame</taxon>
    </lineage>
</organism>
<feature type="signal peptide" evidence="2">
    <location>
        <begin position="1"/>
        <end position="19"/>
    </location>
</feature>
<feature type="chain" id="PRO_0000429222" description="Toxin ICK-15">
    <location>
        <begin position="20"/>
        <end position="92"/>
    </location>
</feature>
<feature type="glycosylation site" description="N-linked (GlcNAc...) asparagine" evidence="2">
    <location>
        <position position="62"/>
    </location>
</feature>
<feature type="disulfide bond" evidence="1">
    <location>
        <begin position="41"/>
        <end position="55"/>
    </location>
</feature>
<feature type="disulfide bond" evidence="1">
    <location>
        <begin position="48"/>
        <end position="67"/>
    </location>
</feature>
<feature type="disulfide bond" evidence="1">
    <location>
        <begin position="54"/>
        <end position="82"/>
    </location>
</feature>
<feature type="disulfide bond" evidence="1">
    <location>
        <begin position="85"/>
        <end position="92"/>
    </location>
</feature>
<evidence type="ECO:0000250" key="1">
    <source>
        <dbReference type="UniProtKB" id="A0A452CSQ9"/>
    </source>
</evidence>
<evidence type="ECO:0000255" key="2"/>
<evidence type="ECO:0000303" key="3">
    <source>
    </source>
</evidence>
<evidence type="ECO:0000305" key="4"/>
<evidence type="ECO:0000305" key="5">
    <source>
    </source>
</evidence>
<dbReference type="EMBL" id="GAQE01000018">
    <property type="protein sequence ID" value="JAB84536.1"/>
    <property type="molecule type" value="Transcribed_RNA"/>
</dbReference>
<dbReference type="SMR" id="W4VS32"/>
<dbReference type="ArachnoServer" id="AS001515">
    <property type="toxin name" value="U5-barytoxin-Tl1a"/>
</dbReference>
<dbReference type="GO" id="GO:0005576">
    <property type="term" value="C:extracellular region"/>
    <property type="evidence" value="ECO:0007669"/>
    <property type="project" value="UniProtKB-SubCell"/>
</dbReference>
<dbReference type="GO" id="GO:0099106">
    <property type="term" value="F:ion channel regulator activity"/>
    <property type="evidence" value="ECO:0007669"/>
    <property type="project" value="UniProtKB-KW"/>
</dbReference>
<dbReference type="GO" id="GO:0090729">
    <property type="term" value="F:toxin activity"/>
    <property type="evidence" value="ECO:0007669"/>
    <property type="project" value="UniProtKB-KW"/>
</dbReference>
<dbReference type="InterPro" id="IPR035311">
    <property type="entry name" value="Cys_Knot_tox"/>
</dbReference>
<dbReference type="Pfam" id="PF17486">
    <property type="entry name" value="Cys_Knot_tox"/>
    <property type="match status" value="1"/>
</dbReference>
<name>TX21F_TRILK</name>
<sequence length="92" mass="10093">MKPIVSILIFCALAVVIMGHPLDSGYGIPHIVEKLPNGQWCKTPGDDCSKSNECCKPKDPENYSGGCVAQWSGMHGKRINMCRICYLESSMC</sequence>
<proteinExistence type="inferred from homology"/>